<accession>Q5MZM0</accession>
<feature type="chain" id="PRO_0000157730" description="UPF0182 protein syc2310_c">
    <location>
        <begin position="1"/>
        <end position="955"/>
    </location>
</feature>
<feature type="transmembrane region" description="Helical" evidence="1">
    <location>
        <begin position="12"/>
        <end position="32"/>
    </location>
</feature>
<feature type="transmembrane region" description="Helical" evidence="1">
    <location>
        <begin position="45"/>
        <end position="65"/>
    </location>
</feature>
<feature type="transmembrane region" description="Helical" evidence="1">
    <location>
        <begin position="85"/>
        <end position="105"/>
    </location>
</feature>
<feature type="transmembrane region" description="Helical" evidence="1">
    <location>
        <begin position="141"/>
        <end position="161"/>
    </location>
</feature>
<feature type="transmembrane region" description="Helical" evidence="1">
    <location>
        <begin position="163"/>
        <end position="183"/>
    </location>
</feature>
<feature type="transmembrane region" description="Helical" evidence="1">
    <location>
        <begin position="224"/>
        <end position="244"/>
    </location>
</feature>
<feature type="transmembrane region" description="Helical" evidence="1">
    <location>
        <begin position="263"/>
        <end position="283"/>
    </location>
</feature>
<feature type="transmembrane region" description="Helical" evidence="1">
    <location>
        <begin position="306"/>
        <end position="326"/>
    </location>
</feature>
<feature type="transmembrane region" description="Helical" evidence="1">
    <location>
        <begin position="343"/>
        <end position="363"/>
    </location>
</feature>
<protein>
    <recommendedName>
        <fullName evidence="1">UPF0182 protein syc2310_c</fullName>
    </recommendedName>
</protein>
<dbReference type="EMBL" id="AP008231">
    <property type="protein sequence ID" value="BAD80500.1"/>
    <property type="molecule type" value="Genomic_DNA"/>
</dbReference>
<dbReference type="RefSeq" id="WP_011244620.1">
    <property type="nucleotide sequence ID" value="NZ_CP085785.1"/>
</dbReference>
<dbReference type="KEGG" id="syc:syc2310_c"/>
<dbReference type="eggNOG" id="COG1615">
    <property type="taxonomic scope" value="Bacteria"/>
</dbReference>
<dbReference type="Proteomes" id="UP000001175">
    <property type="component" value="Chromosome"/>
</dbReference>
<dbReference type="GO" id="GO:0005576">
    <property type="term" value="C:extracellular region"/>
    <property type="evidence" value="ECO:0007669"/>
    <property type="project" value="TreeGrafter"/>
</dbReference>
<dbReference type="GO" id="GO:0005886">
    <property type="term" value="C:plasma membrane"/>
    <property type="evidence" value="ECO:0007669"/>
    <property type="project" value="UniProtKB-SubCell"/>
</dbReference>
<dbReference type="HAMAP" id="MF_01600">
    <property type="entry name" value="UPF0182"/>
    <property type="match status" value="1"/>
</dbReference>
<dbReference type="InterPro" id="IPR005372">
    <property type="entry name" value="UPF0182"/>
</dbReference>
<dbReference type="NCBIfam" id="NF002707">
    <property type="entry name" value="PRK02509.1"/>
    <property type="match status" value="1"/>
</dbReference>
<dbReference type="PANTHER" id="PTHR39344">
    <property type="entry name" value="UPF0182 PROTEIN SLL1060"/>
    <property type="match status" value="1"/>
</dbReference>
<dbReference type="PANTHER" id="PTHR39344:SF1">
    <property type="entry name" value="UPF0182 PROTEIN SLL1060"/>
    <property type="match status" value="1"/>
</dbReference>
<dbReference type="Pfam" id="PF03699">
    <property type="entry name" value="UPF0182"/>
    <property type="match status" value="1"/>
</dbReference>
<proteinExistence type="inferred from homology"/>
<gene>
    <name type="ordered locus">syc2310_c</name>
</gene>
<keyword id="KW-1003">Cell membrane</keyword>
<keyword id="KW-0472">Membrane</keyword>
<keyword id="KW-0812">Transmembrane</keyword>
<keyword id="KW-1133">Transmembrane helix</keyword>
<comment type="subcellular location">
    <subcellularLocation>
        <location evidence="1">Cell membrane</location>
        <topology evidence="1">Multi-pass membrane protein</topology>
    </subcellularLocation>
</comment>
<comment type="similarity">
    <text evidence="1">Belongs to the UPF0182 family.</text>
</comment>
<sequence>MPRHLSRWGLAIAAIALGLSLLTRIHIETLWFTALGIPTVFLRRLAVQALLFSVVGIAITGLIGGNLRWAARHQTDQPDRPAPRLQLGGLLTVLTLLWIALLALTTQAILAAWNCQTGRALPFLPQILTLDWLQSSLITAGSWPLGMGLLLGVGSLVLFLWRPWPLLIGLSSLTSLAIALLTSREWLRIWPAFAAESVSDRDPIFQQDLAFYLFRLPALEVLQFDLWIGLAFSFCAVLAVYYLAKQSVSNAEFRGFAPSQQRHLVRLAIAIALFLAGHCWLAQRQLLFSELGAVYGIGFTDRWVKLPLLQVWMILFGIAAIALFWQSRRGLLPQRWIRNFQLAAIASVLIWVTLPAIVQQLVVQPNEIARELPYLKQAILFTRRAFGLDQIETRTFDPQPSLNRAVLAANRETVQNIRLWDTRPLLQSNRQLQQIRLYYSFPSAQIDRYRLQTSFGDALQQVIIAARELDYTAIPAAAKTWVNEHLVYTHGYGFTLSPVNSSAPDGLPRYFVKDIGANTRIIGDASLGISTEAVKAAISTENPRIYYGQLTRNYVFTPSRTQELDYPSGNDNVYNIYDGKGGVTLGNYAQRLLFSLYLRDWRLPFSGDLTAQTRVLFRRQIEDRVRAIAPFLRYDAEPYLVSVNADTAEASGLGRSSLFWILDAYTVSDRYPYADPGEQPFNYIRNSVKVIIDAYNGSVQFYIVDPKDPLIQTWSRLFPSLFQPIDAMAPVLRSHLRYPTDLFKAQSSQLLTYHVLDPQVFYNRDDQWAYPREIYAGETATVQPYYLITRLPTAASEEFLILTPFTPLGRNNMIAWLAGRSDGEEYGRLLLYEFPRQRLIFGPEQITARINQDPQISEQITLWNREGSRAAEGNLLVIPIDQALLYVEPLYLEASRNSLPALTRVITAYQDRIVMTPSLLESLQKLFPDSTPALTPLEQPVLTTEQSAVLNPDQP</sequence>
<reference key="1">
    <citation type="journal article" date="2007" name="Photosyn. Res.">
        <title>Complete nucleotide sequence of the freshwater unicellular cyanobacterium Synechococcus elongatus PCC 6301 chromosome: gene content and organization.</title>
        <authorList>
            <person name="Sugita C."/>
            <person name="Ogata K."/>
            <person name="Shikata M."/>
            <person name="Jikuya H."/>
            <person name="Takano J."/>
            <person name="Furumichi M."/>
            <person name="Kanehisa M."/>
            <person name="Omata T."/>
            <person name="Sugiura M."/>
            <person name="Sugita M."/>
        </authorList>
    </citation>
    <scope>NUCLEOTIDE SEQUENCE [LARGE SCALE GENOMIC DNA]</scope>
    <source>
        <strain>ATCC 27144 / PCC 6301 / SAUG 1402/1</strain>
    </source>
</reference>
<evidence type="ECO:0000255" key="1">
    <source>
        <dbReference type="HAMAP-Rule" id="MF_01600"/>
    </source>
</evidence>
<name>Y2310_SYNP6</name>
<organism>
    <name type="scientific">Synechococcus sp. (strain ATCC 27144 / PCC 6301 / SAUG 1402/1)</name>
    <name type="common">Anacystis nidulans</name>
    <dbReference type="NCBI Taxonomy" id="269084"/>
    <lineage>
        <taxon>Bacteria</taxon>
        <taxon>Bacillati</taxon>
        <taxon>Cyanobacteriota</taxon>
        <taxon>Cyanophyceae</taxon>
        <taxon>Synechococcales</taxon>
        <taxon>Synechococcaceae</taxon>
        <taxon>Synechococcus</taxon>
    </lineage>
</organism>